<feature type="chain" id="PRO_0000300513" description="Formate--tetrahydrofolate ligase">
    <location>
        <begin position="1"/>
        <end position="556"/>
    </location>
</feature>
<feature type="binding site" evidence="1">
    <location>
        <begin position="64"/>
        <end position="71"/>
    </location>
    <ligand>
        <name>ATP</name>
        <dbReference type="ChEBI" id="CHEBI:30616"/>
    </ligand>
</feature>
<evidence type="ECO:0000255" key="1">
    <source>
        <dbReference type="HAMAP-Rule" id="MF_01543"/>
    </source>
</evidence>
<dbReference type="EC" id="6.3.4.3" evidence="1"/>
<dbReference type="EMBL" id="CP000569">
    <property type="protein sequence ID" value="ABN73570.1"/>
    <property type="molecule type" value="Genomic_DNA"/>
</dbReference>
<dbReference type="RefSeq" id="WP_005596596.1">
    <property type="nucleotide sequence ID" value="NC_009053.1"/>
</dbReference>
<dbReference type="SMR" id="A3MZI4"/>
<dbReference type="STRING" id="416269.APL_0466"/>
<dbReference type="EnsemblBacteria" id="ABN73570">
    <property type="protein sequence ID" value="ABN73570"/>
    <property type="gene ID" value="APL_0466"/>
</dbReference>
<dbReference type="KEGG" id="apl:APL_0466"/>
<dbReference type="eggNOG" id="COG2759">
    <property type="taxonomic scope" value="Bacteria"/>
</dbReference>
<dbReference type="HOGENOM" id="CLU_003601_3_3_6"/>
<dbReference type="UniPathway" id="UPA00193"/>
<dbReference type="Proteomes" id="UP000001432">
    <property type="component" value="Chromosome"/>
</dbReference>
<dbReference type="GO" id="GO:0005524">
    <property type="term" value="F:ATP binding"/>
    <property type="evidence" value="ECO:0007669"/>
    <property type="project" value="UniProtKB-UniRule"/>
</dbReference>
<dbReference type="GO" id="GO:0004329">
    <property type="term" value="F:formate-tetrahydrofolate ligase activity"/>
    <property type="evidence" value="ECO:0007669"/>
    <property type="project" value="UniProtKB-UniRule"/>
</dbReference>
<dbReference type="GO" id="GO:0035999">
    <property type="term" value="P:tetrahydrofolate interconversion"/>
    <property type="evidence" value="ECO:0007669"/>
    <property type="project" value="UniProtKB-UniRule"/>
</dbReference>
<dbReference type="CDD" id="cd00477">
    <property type="entry name" value="FTHFS"/>
    <property type="match status" value="1"/>
</dbReference>
<dbReference type="FunFam" id="3.30.1510.10:FF:000001">
    <property type="entry name" value="Formate--tetrahydrofolate ligase"/>
    <property type="match status" value="1"/>
</dbReference>
<dbReference type="FunFam" id="3.10.410.10:FF:000001">
    <property type="entry name" value="Putative formate--tetrahydrofolate ligase"/>
    <property type="match status" value="1"/>
</dbReference>
<dbReference type="Gene3D" id="3.30.1510.10">
    <property type="entry name" value="Domain 2, N(10)-formyltetrahydrofolate synthetase"/>
    <property type="match status" value="1"/>
</dbReference>
<dbReference type="Gene3D" id="3.10.410.10">
    <property type="entry name" value="Formyltetrahydrofolate synthetase, domain 3"/>
    <property type="match status" value="1"/>
</dbReference>
<dbReference type="Gene3D" id="3.40.50.300">
    <property type="entry name" value="P-loop containing nucleotide triphosphate hydrolases"/>
    <property type="match status" value="1"/>
</dbReference>
<dbReference type="HAMAP" id="MF_01543">
    <property type="entry name" value="FTHFS"/>
    <property type="match status" value="1"/>
</dbReference>
<dbReference type="InterPro" id="IPR000559">
    <property type="entry name" value="Formate_THF_ligase"/>
</dbReference>
<dbReference type="InterPro" id="IPR020628">
    <property type="entry name" value="Formate_THF_ligase_CS"/>
</dbReference>
<dbReference type="InterPro" id="IPR027417">
    <property type="entry name" value="P-loop_NTPase"/>
</dbReference>
<dbReference type="NCBIfam" id="NF010030">
    <property type="entry name" value="PRK13505.1"/>
    <property type="match status" value="1"/>
</dbReference>
<dbReference type="Pfam" id="PF01268">
    <property type="entry name" value="FTHFS"/>
    <property type="match status" value="1"/>
</dbReference>
<dbReference type="SUPFAM" id="SSF52540">
    <property type="entry name" value="P-loop containing nucleoside triphosphate hydrolases"/>
    <property type="match status" value="1"/>
</dbReference>
<dbReference type="PROSITE" id="PS00721">
    <property type="entry name" value="FTHFS_1"/>
    <property type="match status" value="1"/>
</dbReference>
<gene>
    <name evidence="1" type="primary">fhs</name>
    <name type="ordered locus">APL_0466</name>
</gene>
<sequence length="556" mass="58955">MKSDVEIAQAATMQPIHKIAEKLGLNADQIEQYGKYKAKINPTDAFKLPAKNGKLILVTAINPTPAGEGKTTVTIGLTDALNQLGKNAVVAAREPSLGPVFGVKGGAAGGGYAQVLPMEDINLHFTGDFHAITSANNLLAALLDNHIYQGNALNIDTKRVLWRRVIDMNDRQLRNVLGGLGNPTDGVIRPDGFDITVASEVMAIFCLAKDLADLKTRLGNILVAYTKDKQPVYAKDLNAHGAMAALLKDAIKPNLVQTIEGSPAFIHGGPFANIAHGCNSVTATRLALHLGDYAVTEAGFGADLGAEKFCDIKCRLADLKPDVAVVVATVKALKYNGGVEKANLAEENLTALQQGLPNLLKHISNLKNVFGLPVVVALNRFVSDTDAELALIQTACAKQGVEVSLTEVWGKGGAGGVDLAQKVLKAIDEQENRFNFVYDVNESVQNKIKAIAQKIYGADDVNFSAEALAEIKNLEKLGLDKLPICMAKTQYSLSDNAKLLGCPSGFTVTVRSISVSAGAGFIVAICGSIMRMPGLPKVPAANRIDVDENGLITGLF</sequence>
<accession>A3MZI4</accession>
<keyword id="KW-0067">ATP-binding</keyword>
<keyword id="KW-0436">Ligase</keyword>
<keyword id="KW-0547">Nucleotide-binding</keyword>
<keyword id="KW-0554">One-carbon metabolism</keyword>
<keyword id="KW-1185">Reference proteome</keyword>
<reference key="1">
    <citation type="journal article" date="2008" name="J. Bacteriol.">
        <title>The complete genome sequence of Actinobacillus pleuropneumoniae L20 (serotype 5b).</title>
        <authorList>
            <person name="Foote S.J."/>
            <person name="Bosse J.T."/>
            <person name="Bouevitch A.B."/>
            <person name="Langford P.R."/>
            <person name="Young N.M."/>
            <person name="Nash J.H.E."/>
        </authorList>
    </citation>
    <scope>NUCLEOTIDE SEQUENCE [LARGE SCALE GENOMIC DNA]</scope>
    <source>
        <strain>L20</strain>
    </source>
</reference>
<name>FTHS_ACTP2</name>
<proteinExistence type="inferred from homology"/>
<protein>
    <recommendedName>
        <fullName evidence="1">Formate--tetrahydrofolate ligase</fullName>
        <ecNumber evidence="1">6.3.4.3</ecNumber>
    </recommendedName>
    <alternativeName>
        <fullName evidence="1">Formyltetrahydrofolate synthetase</fullName>
        <shortName evidence="1">FHS</shortName>
        <shortName evidence="1">FTHFS</shortName>
    </alternativeName>
</protein>
<comment type="catalytic activity">
    <reaction evidence="1">
        <text>(6S)-5,6,7,8-tetrahydrofolate + formate + ATP = (6R)-10-formyltetrahydrofolate + ADP + phosphate</text>
        <dbReference type="Rhea" id="RHEA:20221"/>
        <dbReference type="ChEBI" id="CHEBI:15740"/>
        <dbReference type="ChEBI" id="CHEBI:30616"/>
        <dbReference type="ChEBI" id="CHEBI:43474"/>
        <dbReference type="ChEBI" id="CHEBI:57453"/>
        <dbReference type="ChEBI" id="CHEBI:195366"/>
        <dbReference type="ChEBI" id="CHEBI:456216"/>
        <dbReference type="EC" id="6.3.4.3"/>
    </reaction>
</comment>
<comment type="pathway">
    <text evidence="1">One-carbon metabolism; tetrahydrofolate interconversion.</text>
</comment>
<comment type="similarity">
    <text evidence="1">Belongs to the formate--tetrahydrofolate ligase family.</text>
</comment>
<organism>
    <name type="scientific">Actinobacillus pleuropneumoniae serotype 5b (strain L20)</name>
    <dbReference type="NCBI Taxonomy" id="416269"/>
    <lineage>
        <taxon>Bacteria</taxon>
        <taxon>Pseudomonadati</taxon>
        <taxon>Pseudomonadota</taxon>
        <taxon>Gammaproteobacteria</taxon>
        <taxon>Pasteurellales</taxon>
        <taxon>Pasteurellaceae</taxon>
        <taxon>Actinobacillus</taxon>
    </lineage>
</organism>